<gene>
    <name evidence="1" type="primary">rplT</name>
    <name type="ordered locus">BPEN_365</name>
</gene>
<organism>
    <name type="scientific">Blochmanniella pennsylvanica (strain BPEN)</name>
    <dbReference type="NCBI Taxonomy" id="291272"/>
    <lineage>
        <taxon>Bacteria</taxon>
        <taxon>Pseudomonadati</taxon>
        <taxon>Pseudomonadota</taxon>
        <taxon>Gammaproteobacteria</taxon>
        <taxon>Enterobacterales</taxon>
        <taxon>Enterobacteriaceae</taxon>
        <taxon>ant endosymbionts</taxon>
        <taxon>Candidatus Blochmanniella</taxon>
    </lineage>
</organism>
<dbReference type="EMBL" id="CP000016">
    <property type="protein sequence ID" value="AAZ40990.1"/>
    <property type="molecule type" value="Genomic_DNA"/>
</dbReference>
<dbReference type="RefSeq" id="WP_011282899.1">
    <property type="nucleotide sequence ID" value="NC_007292.1"/>
</dbReference>
<dbReference type="SMR" id="Q492V2"/>
<dbReference type="STRING" id="291272.BPEN_365"/>
<dbReference type="KEGG" id="bpn:BPEN_365"/>
<dbReference type="eggNOG" id="COG0292">
    <property type="taxonomic scope" value="Bacteria"/>
</dbReference>
<dbReference type="HOGENOM" id="CLU_123265_0_1_6"/>
<dbReference type="OrthoDB" id="9808966at2"/>
<dbReference type="Proteomes" id="UP000007794">
    <property type="component" value="Chromosome"/>
</dbReference>
<dbReference type="GO" id="GO:1990904">
    <property type="term" value="C:ribonucleoprotein complex"/>
    <property type="evidence" value="ECO:0007669"/>
    <property type="project" value="UniProtKB-KW"/>
</dbReference>
<dbReference type="GO" id="GO:0005840">
    <property type="term" value="C:ribosome"/>
    <property type="evidence" value="ECO:0007669"/>
    <property type="project" value="UniProtKB-KW"/>
</dbReference>
<dbReference type="GO" id="GO:0019843">
    <property type="term" value="F:rRNA binding"/>
    <property type="evidence" value="ECO:0007669"/>
    <property type="project" value="UniProtKB-UniRule"/>
</dbReference>
<dbReference type="GO" id="GO:0003735">
    <property type="term" value="F:structural constituent of ribosome"/>
    <property type="evidence" value="ECO:0007669"/>
    <property type="project" value="InterPro"/>
</dbReference>
<dbReference type="GO" id="GO:0000027">
    <property type="term" value="P:ribosomal large subunit assembly"/>
    <property type="evidence" value="ECO:0007669"/>
    <property type="project" value="UniProtKB-UniRule"/>
</dbReference>
<dbReference type="GO" id="GO:0006412">
    <property type="term" value="P:translation"/>
    <property type="evidence" value="ECO:0007669"/>
    <property type="project" value="InterPro"/>
</dbReference>
<dbReference type="CDD" id="cd07026">
    <property type="entry name" value="Ribosomal_L20"/>
    <property type="match status" value="1"/>
</dbReference>
<dbReference type="FunFam" id="1.10.1900.20:FF:000001">
    <property type="entry name" value="50S ribosomal protein L20"/>
    <property type="match status" value="1"/>
</dbReference>
<dbReference type="Gene3D" id="6.10.160.10">
    <property type="match status" value="1"/>
</dbReference>
<dbReference type="Gene3D" id="1.10.1900.20">
    <property type="entry name" value="Ribosomal protein L20"/>
    <property type="match status" value="1"/>
</dbReference>
<dbReference type="HAMAP" id="MF_00382">
    <property type="entry name" value="Ribosomal_bL20"/>
    <property type="match status" value="1"/>
</dbReference>
<dbReference type="InterPro" id="IPR005813">
    <property type="entry name" value="Ribosomal_bL20"/>
</dbReference>
<dbReference type="InterPro" id="IPR049946">
    <property type="entry name" value="RIBOSOMAL_L20_CS"/>
</dbReference>
<dbReference type="InterPro" id="IPR035566">
    <property type="entry name" value="Ribosomal_protein_bL20_C"/>
</dbReference>
<dbReference type="NCBIfam" id="TIGR01032">
    <property type="entry name" value="rplT_bact"/>
    <property type="match status" value="1"/>
</dbReference>
<dbReference type="PANTHER" id="PTHR10986">
    <property type="entry name" value="39S RIBOSOMAL PROTEIN L20"/>
    <property type="match status" value="1"/>
</dbReference>
<dbReference type="Pfam" id="PF00453">
    <property type="entry name" value="Ribosomal_L20"/>
    <property type="match status" value="1"/>
</dbReference>
<dbReference type="PRINTS" id="PR00062">
    <property type="entry name" value="RIBOSOMALL20"/>
</dbReference>
<dbReference type="SUPFAM" id="SSF74731">
    <property type="entry name" value="Ribosomal protein L20"/>
    <property type="match status" value="1"/>
</dbReference>
<dbReference type="PROSITE" id="PS00937">
    <property type="entry name" value="RIBOSOMAL_L20"/>
    <property type="match status" value="1"/>
</dbReference>
<sequence length="120" mass="14132">MTRVKNSVVARARHKKILKQAAGYYGARSRTYRVAYQSVIKSGQYSYRDRRQKKRLFRRLWINRINAASRKYGMSYNHLINGLQKCNVCINRKMLADIAIFDRETFSALIDKAKINCEHT</sequence>
<comment type="function">
    <text evidence="1">Binds directly to 23S ribosomal RNA and is necessary for the in vitro assembly process of the 50S ribosomal subunit. It is not involved in the protein synthesizing functions of that subunit.</text>
</comment>
<comment type="similarity">
    <text evidence="1">Belongs to the bacterial ribosomal protein bL20 family.</text>
</comment>
<evidence type="ECO:0000255" key="1">
    <source>
        <dbReference type="HAMAP-Rule" id="MF_00382"/>
    </source>
</evidence>
<evidence type="ECO:0000305" key="2"/>
<keyword id="KW-1185">Reference proteome</keyword>
<keyword id="KW-0687">Ribonucleoprotein</keyword>
<keyword id="KW-0689">Ribosomal protein</keyword>
<keyword id="KW-0694">RNA-binding</keyword>
<keyword id="KW-0699">rRNA-binding</keyword>
<reference key="1">
    <citation type="journal article" date="2005" name="Genome Res.">
        <title>Genome sequence of Blochmannia pennsylvanicus indicates parallel evolutionary trends among bacterial mutualists of insects.</title>
        <authorList>
            <person name="Degnan P.H."/>
            <person name="Lazarus A.B."/>
            <person name="Wernegreen J.J."/>
        </authorList>
    </citation>
    <scope>NUCLEOTIDE SEQUENCE [LARGE SCALE GENOMIC DNA]</scope>
    <source>
        <strain>BPEN</strain>
    </source>
</reference>
<feature type="chain" id="PRO_0000243659" description="Large ribosomal subunit protein bL20">
    <location>
        <begin position="1"/>
        <end position="120"/>
    </location>
</feature>
<accession>Q492V2</accession>
<protein>
    <recommendedName>
        <fullName evidence="1">Large ribosomal subunit protein bL20</fullName>
    </recommendedName>
    <alternativeName>
        <fullName evidence="2">50S ribosomal protein L20</fullName>
    </alternativeName>
</protein>
<name>RL20_BLOPB</name>
<proteinExistence type="inferred from homology"/>